<gene>
    <name evidence="1" type="primary">atpA</name>
    <name type="ordered locus">BRE_96</name>
</gene>
<sequence>MEAKGKVVGVIGNLVTIEMVGTVSMNEIVFIKTGGQSLKAEIIRIRDGEVDAQVFEMTRGIAVGDDVEFTDKLLTVELGPGLLSQVYDGLQNPLPELATKCGFFLERGLYLSALDRNKKWSFNATAKVGDFIVAGDFLGFVIEGTINHKIMVPFDRRDSYRIIEIVGDGDYTVDDRIAVIEDDAGGKHIITMSFHWPVKVPVTSYKKRLIPNETMVTQTRIIDTFFPVAKGGTFCIPGPFGAGKTVLQQVTSRNADVDIVIIAACGERAGEVVETLKEFPELTDPRTGKSLMERTCIICNTSSMPVAAREASVYTAITISEYYRQMGLDILLLADSTSRWAQAMREMSGRLEEIPGDEAFPAYLESVIASFYERAGVVVLNNGSVGSVTVGGSVSPAGGNFEEPVTQATLKVVGAFHGLTRERSDARKFPAINPLDSWSKYRGVVEYEATEYARAFLVKGNEVNQMMRVVGEDGVSIDDFVVYLKSELLDSCYLQQNSFDSVDAAVSFERQNYMFNILYKILQSDFKFENKLEARSFINDLRQNILDMNLAPFKQEKFNKLEINLKNLLRSKKLDF</sequence>
<comment type="function">
    <text evidence="1">Produces ATP from ADP in the presence of a proton gradient across the membrane. The V-type alpha chain is a catalytic subunit.</text>
</comment>
<comment type="catalytic activity">
    <reaction evidence="1">
        <text>ATP + H2O + 4 H(+)(in) = ADP + phosphate + 5 H(+)(out)</text>
        <dbReference type="Rhea" id="RHEA:57720"/>
        <dbReference type="ChEBI" id="CHEBI:15377"/>
        <dbReference type="ChEBI" id="CHEBI:15378"/>
        <dbReference type="ChEBI" id="CHEBI:30616"/>
        <dbReference type="ChEBI" id="CHEBI:43474"/>
        <dbReference type="ChEBI" id="CHEBI:456216"/>
        <dbReference type="EC" id="7.1.2.2"/>
    </reaction>
</comment>
<comment type="similarity">
    <text evidence="1">Belongs to the ATPase alpha/beta chains family.</text>
</comment>
<organism>
    <name type="scientific">Borrelia recurrentis (strain A1)</name>
    <dbReference type="NCBI Taxonomy" id="412418"/>
    <lineage>
        <taxon>Bacteria</taxon>
        <taxon>Pseudomonadati</taxon>
        <taxon>Spirochaetota</taxon>
        <taxon>Spirochaetia</taxon>
        <taxon>Spirochaetales</taxon>
        <taxon>Borreliaceae</taxon>
        <taxon>Borrelia</taxon>
    </lineage>
</organism>
<keyword id="KW-0066">ATP synthesis</keyword>
<keyword id="KW-0067">ATP-binding</keyword>
<keyword id="KW-0375">Hydrogen ion transport</keyword>
<keyword id="KW-0406">Ion transport</keyword>
<keyword id="KW-0547">Nucleotide-binding</keyword>
<keyword id="KW-1278">Translocase</keyword>
<keyword id="KW-0813">Transport</keyword>
<feature type="chain" id="PRO_1000115633" description="V-type ATP synthase alpha chain">
    <location>
        <begin position="1"/>
        <end position="576"/>
    </location>
</feature>
<feature type="binding site" evidence="1">
    <location>
        <begin position="238"/>
        <end position="245"/>
    </location>
    <ligand>
        <name>ATP</name>
        <dbReference type="ChEBI" id="CHEBI:30616"/>
    </ligand>
</feature>
<evidence type="ECO:0000255" key="1">
    <source>
        <dbReference type="HAMAP-Rule" id="MF_00309"/>
    </source>
</evidence>
<proteinExistence type="inferred from homology"/>
<accession>B5RQS2</accession>
<protein>
    <recommendedName>
        <fullName evidence="1">V-type ATP synthase alpha chain</fullName>
        <ecNumber evidence="1">7.1.2.2</ecNumber>
    </recommendedName>
    <alternativeName>
        <fullName evidence="1">V-ATPase subunit A</fullName>
    </alternativeName>
</protein>
<name>VATA_BORRA</name>
<reference key="1">
    <citation type="journal article" date="2008" name="PLoS Genet.">
        <title>The genome of Borrelia recurrentis, the agent of deadly louse-borne relapsing fever, is a degraded subset of tick-borne Borrelia duttonii.</title>
        <authorList>
            <person name="Lescot M."/>
            <person name="Audic S."/>
            <person name="Robert C."/>
            <person name="Nguyen T.T."/>
            <person name="Blanc G."/>
            <person name="Cutler S.J."/>
            <person name="Wincker P."/>
            <person name="Couloux A."/>
            <person name="Claverie J.-M."/>
            <person name="Raoult D."/>
            <person name="Drancourt M."/>
        </authorList>
    </citation>
    <scope>NUCLEOTIDE SEQUENCE [LARGE SCALE GENOMIC DNA]</scope>
    <source>
        <strain>A1</strain>
    </source>
</reference>
<dbReference type="EC" id="7.1.2.2" evidence="1"/>
<dbReference type="EMBL" id="CP000993">
    <property type="protein sequence ID" value="ACH94356.1"/>
    <property type="molecule type" value="Genomic_DNA"/>
</dbReference>
<dbReference type="RefSeq" id="WP_012538655.1">
    <property type="nucleotide sequence ID" value="NC_011244.1"/>
</dbReference>
<dbReference type="SMR" id="B5RQS2"/>
<dbReference type="KEGG" id="bre:BRE_96"/>
<dbReference type="HOGENOM" id="CLU_008162_1_1_12"/>
<dbReference type="Proteomes" id="UP000000612">
    <property type="component" value="Chromosome"/>
</dbReference>
<dbReference type="GO" id="GO:0045259">
    <property type="term" value="C:proton-transporting ATP synthase complex"/>
    <property type="evidence" value="ECO:0007669"/>
    <property type="project" value="UniProtKB-ARBA"/>
</dbReference>
<dbReference type="GO" id="GO:0005524">
    <property type="term" value="F:ATP binding"/>
    <property type="evidence" value="ECO:0007669"/>
    <property type="project" value="UniProtKB-UniRule"/>
</dbReference>
<dbReference type="GO" id="GO:0046933">
    <property type="term" value="F:proton-transporting ATP synthase activity, rotational mechanism"/>
    <property type="evidence" value="ECO:0007669"/>
    <property type="project" value="UniProtKB-UniRule"/>
</dbReference>
<dbReference type="GO" id="GO:0046961">
    <property type="term" value="F:proton-transporting ATPase activity, rotational mechanism"/>
    <property type="evidence" value="ECO:0007669"/>
    <property type="project" value="InterPro"/>
</dbReference>
<dbReference type="GO" id="GO:0042777">
    <property type="term" value="P:proton motive force-driven plasma membrane ATP synthesis"/>
    <property type="evidence" value="ECO:0007669"/>
    <property type="project" value="UniProtKB-UniRule"/>
</dbReference>
<dbReference type="CDD" id="cd01426">
    <property type="entry name" value="ATP-synt_F1_V1_A1_AB_FliI_N"/>
    <property type="match status" value="1"/>
</dbReference>
<dbReference type="CDD" id="cd18111">
    <property type="entry name" value="ATP-synt_V_A-type_alpha_C"/>
    <property type="match status" value="1"/>
</dbReference>
<dbReference type="CDD" id="cd01134">
    <property type="entry name" value="V_A-ATPase_A"/>
    <property type="match status" value="1"/>
</dbReference>
<dbReference type="Gene3D" id="2.40.30.20">
    <property type="match status" value="1"/>
</dbReference>
<dbReference type="Gene3D" id="2.40.50.100">
    <property type="match status" value="1"/>
</dbReference>
<dbReference type="Gene3D" id="1.10.1140.10">
    <property type="entry name" value="Bovine Mitochondrial F1-atpase, Atp Synthase Beta Chain, Chain D, domain 3"/>
    <property type="match status" value="1"/>
</dbReference>
<dbReference type="Gene3D" id="3.40.50.300">
    <property type="entry name" value="P-loop containing nucleotide triphosphate hydrolases"/>
    <property type="match status" value="1"/>
</dbReference>
<dbReference type="HAMAP" id="MF_00309">
    <property type="entry name" value="ATP_synth_A_arch"/>
    <property type="match status" value="1"/>
</dbReference>
<dbReference type="InterPro" id="IPR055190">
    <property type="entry name" value="ATP-synt_VA_C"/>
</dbReference>
<dbReference type="InterPro" id="IPR031686">
    <property type="entry name" value="ATP-synth_a_Xtn"/>
</dbReference>
<dbReference type="InterPro" id="IPR023366">
    <property type="entry name" value="ATP_synth_asu-like_sf"/>
</dbReference>
<dbReference type="InterPro" id="IPR020003">
    <property type="entry name" value="ATPase_a/bsu_AS"/>
</dbReference>
<dbReference type="InterPro" id="IPR004100">
    <property type="entry name" value="ATPase_F1/V1/A1_a/bsu_N"/>
</dbReference>
<dbReference type="InterPro" id="IPR036121">
    <property type="entry name" value="ATPase_F1/V1/A1_a/bsu_N_sf"/>
</dbReference>
<dbReference type="InterPro" id="IPR000194">
    <property type="entry name" value="ATPase_F1/V1/A1_a/bsu_nucl-bd"/>
</dbReference>
<dbReference type="InterPro" id="IPR024034">
    <property type="entry name" value="ATPase_F1/V1_b/a_C"/>
</dbReference>
<dbReference type="InterPro" id="IPR027417">
    <property type="entry name" value="P-loop_NTPase"/>
</dbReference>
<dbReference type="InterPro" id="IPR022878">
    <property type="entry name" value="V-ATPase_asu"/>
</dbReference>
<dbReference type="NCBIfam" id="NF003220">
    <property type="entry name" value="PRK04192.1"/>
    <property type="match status" value="1"/>
</dbReference>
<dbReference type="PANTHER" id="PTHR43607:SF1">
    <property type="entry name" value="H(+)-TRANSPORTING TWO-SECTOR ATPASE"/>
    <property type="match status" value="1"/>
</dbReference>
<dbReference type="PANTHER" id="PTHR43607">
    <property type="entry name" value="V-TYPE PROTON ATPASE CATALYTIC SUBUNIT A"/>
    <property type="match status" value="1"/>
</dbReference>
<dbReference type="Pfam" id="PF00006">
    <property type="entry name" value="ATP-synt_ab"/>
    <property type="match status" value="1"/>
</dbReference>
<dbReference type="Pfam" id="PF02874">
    <property type="entry name" value="ATP-synt_ab_N"/>
    <property type="match status" value="1"/>
</dbReference>
<dbReference type="Pfam" id="PF16886">
    <property type="entry name" value="ATP-synt_ab_Xtn"/>
    <property type="match status" value="1"/>
</dbReference>
<dbReference type="Pfam" id="PF22919">
    <property type="entry name" value="ATP-synt_VA_C"/>
    <property type="match status" value="1"/>
</dbReference>
<dbReference type="SUPFAM" id="SSF47917">
    <property type="entry name" value="C-terminal domain of alpha and beta subunits of F1 ATP synthase"/>
    <property type="match status" value="1"/>
</dbReference>
<dbReference type="SUPFAM" id="SSF50615">
    <property type="entry name" value="N-terminal domain of alpha and beta subunits of F1 ATP synthase"/>
    <property type="match status" value="1"/>
</dbReference>
<dbReference type="SUPFAM" id="SSF52540">
    <property type="entry name" value="P-loop containing nucleoside triphosphate hydrolases"/>
    <property type="match status" value="1"/>
</dbReference>
<dbReference type="PROSITE" id="PS00152">
    <property type="entry name" value="ATPASE_ALPHA_BETA"/>
    <property type="match status" value="1"/>
</dbReference>